<accession>B7UQ92</accession>
<protein>
    <recommendedName>
        <fullName evidence="1">Peptidyl-tRNA hydrolase</fullName>
        <shortName evidence="1">Pth</shortName>
        <ecNumber evidence="1">3.1.1.29</ecNumber>
    </recommendedName>
</protein>
<organism>
    <name type="scientific">Escherichia coli O127:H6 (strain E2348/69 / EPEC)</name>
    <dbReference type="NCBI Taxonomy" id="574521"/>
    <lineage>
        <taxon>Bacteria</taxon>
        <taxon>Pseudomonadati</taxon>
        <taxon>Pseudomonadota</taxon>
        <taxon>Gammaproteobacteria</taxon>
        <taxon>Enterobacterales</taxon>
        <taxon>Enterobacteriaceae</taxon>
        <taxon>Escherichia</taxon>
    </lineage>
</organism>
<comment type="function">
    <text evidence="1">Hydrolyzes ribosome-free peptidyl-tRNAs (with 1 or more amino acids incorporated), which drop off the ribosome during protein synthesis, or as a result of ribosome stalling.</text>
</comment>
<comment type="function">
    <text evidence="1">Catalyzes the release of premature peptidyl moieties from peptidyl-tRNA molecules trapped in stalled 50S ribosomal subunits, and thus maintains levels of free tRNAs and 50S ribosomes.</text>
</comment>
<comment type="catalytic activity">
    <reaction evidence="1">
        <text>an N-acyl-L-alpha-aminoacyl-tRNA + H2O = an N-acyl-L-amino acid + a tRNA + H(+)</text>
        <dbReference type="Rhea" id="RHEA:54448"/>
        <dbReference type="Rhea" id="RHEA-COMP:10123"/>
        <dbReference type="Rhea" id="RHEA-COMP:13883"/>
        <dbReference type="ChEBI" id="CHEBI:15377"/>
        <dbReference type="ChEBI" id="CHEBI:15378"/>
        <dbReference type="ChEBI" id="CHEBI:59874"/>
        <dbReference type="ChEBI" id="CHEBI:78442"/>
        <dbReference type="ChEBI" id="CHEBI:138191"/>
        <dbReference type="EC" id="3.1.1.29"/>
    </reaction>
</comment>
<comment type="subunit">
    <text evidence="1">Monomer.</text>
</comment>
<comment type="subcellular location">
    <subcellularLocation>
        <location evidence="1">Cytoplasm</location>
    </subcellularLocation>
</comment>
<comment type="similarity">
    <text evidence="1">Belongs to the PTH family.</text>
</comment>
<reference key="1">
    <citation type="journal article" date="2009" name="J. Bacteriol.">
        <title>Complete genome sequence and comparative genome analysis of enteropathogenic Escherichia coli O127:H6 strain E2348/69.</title>
        <authorList>
            <person name="Iguchi A."/>
            <person name="Thomson N.R."/>
            <person name="Ogura Y."/>
            <person name="Saunders D."/>
            <person name="Ooka T."/>
            <person name="Henderson I.R."/>
            <person name="Harris D."/>
            <person name="Asadulghani M."/>
            <person name="Kurokawa K."/>
            <person name="Dean P."/>
            <person name="Kenny B."/>
            <person name="Quail M.A."/>
            <person name="Thurston S."/>
            <person name="Dougan G."/>
            <person name="Hayashi T."/>
            <person name="Parkhill J."/>
            <person name="Frankel G."/>
        </authorList>
    </citation>
    <scope>NUCLEOTIDE SEQUENCE [LARGE SCALE GENOMIC DNA]</scope>
    <source>
        <strain>E2348/69 / EPEC</strain>
    </source>
</reference>
<feature type="chain" id="PRO_1000118389" description="Peptidyl-tRNA hydrolase">
    <location>
        <begin position="1"/>
        <end position="194"/>
    </location>
</feature>
<feature type="active site" description="Proton acceptor" evidence="1">
    <location>
        <position position="21"/>
    </location>
</feature>
<feature type="binding site" evidence="1">
    <location>
        <position position="16"/>
    </location>
    <ligand>
        <name>tRNA</name>
        <dbReference type="ChEBI" id="CHEBI:17843"/>
    </ligand>
</feature>
<feature type="binding site" evidence="1">
    <location>
        <position position="67"/>
    </location>
    <ligand>
        <name>tRNA</name>
        <dbReference type="ChEBI" id="CHEBI:17843"/>
    </ligand>
</feature>
<feature type="binding site" evidence="1">
    <location>
        <position position="69"/>
    </location>
    <ligand>
        <name>tRNA</name>
        <dbReference type="ChEBI" id="CHEBI:17843"/>
    </ligand>
</feature>
<feature type="binding site" evidence="1">
    <location>
        <position position="115"/>
    </location>
    <ligand>
        <name>tRNA</name>
        <dbReference type="ChEBI" id="CHEBI:17843"/>
    </ligand>
</feature>
<feature type="site" description="Discriminates between blocked and unblocked aminoacyl-tRNA" evidence="1">
    <location>
        <position position="11"/>
    </location>
</feature>
<feature type="site" description="Stabilizes the basic form of H active site to accept a proton" evidence="1">
    <location>
        <position position="94"/>
    </location>
</feature>
<sequence length="194" mass="21082">MTIKLIVGLANPGAEYAATRHNAGAWFVDLLAERLRAPLREEAKFFGYTSRVTLGGEDVRLLVPTTFMNLSGKAVAAMASFFRINPDEILVAHDELDLPPGVAKFKLGGGHGGHNGLKDIISKLGNNPNFHRLRIGIGHPGDKNKVVGFVLGKPPVSEQKLIDEAIDEAARCTEMWFTDGLTKATNRLHAFKAQ</sequence>
<gene>
    <name evidence="1" type="primary">pth</name>
    <name type="ordered locus">E2348C_1327</name>
</gene>
<evidence type="ECO:0000255" key="1">
    <source>
        <dbReference type="HAMAP-Rule" id="MF_00083"/>
    </source>
</evidence>
<name>PTH_ECO27</name>
<proteinExistence type="inferred from homology"/>
<dbReference type="EC" id="3.1.1.29" evidence="1"/>
<dbReference type="EMBL" id="FM180568">
    <property type="protein sequence ID" value="CAS08875.1"/>
    <property type="molecule type" value="Genomic_DNA"/>
</dbReference>
<dbReference type="RefSeq" id="WP_000152933.1">
    <property type="nucleotide sequence ID" value="NC_011601.1"/>
</dbReference>
<dbReference type="SMR" id="B7UQ92"/>
<dbReference type="GeneID" id="93775269"/>
<dbReference type="KEGG" id="ecg:E2348C_1327"/>
<dbReference type="HOGENOM" id="CLU_062456_3_1_6"/>
<dbReference type="Proteomes" id="UP000008205">
    <property type="component" value="Chromosome"/>
</dbReference>
<dbReference type="GO" id="GO:0005737">
    <property type="term" value="C:cytoplasm"/>
    <property type="evidence" value="ECO:0007669"/>
    <property type="project" value="UniProtKB-SubCell"/>
</dbReference>
<dbReference type="GO" id="GO:0004045">
    <property type="term" value="F:peptidyl-tRNA hydrolase activity"/>
    <property type="evidence" value="ECO:0007669"/>
    <property type="project" value="UniProtKB-UniRule"/>
</dbReference>
<dbReference type="GO" id="GO:0000049">
    <property type="term" value="F:tRNA binding"/>
    <property type="evidence" value="ECO:0007669"/>
    <property type="project" value="UniProtKB-UniRule"/>
</dbReference>
<dbReference type="GO" id="GO:0006515">
    <property type="term" value="P:protein quality control for misfolded or incompletely synthesized proteins"/>
    <property type="evidence" value="ECO:0007669"/>
    <property type="project" value="UniProtKB-UniRule"/>
</dbReference>
<dbReference type="GO" id="GO:0072344">
    <property type="term" value="P:rescue of stalled ribosome"/>
    <property type="evidence" value="ECO:0007669"/>
    <property type="project" value="UniProtKB-UniRule"/>
</dbReference>
<dbReference type="CDD" id="cd00462">
    <property type="entry name" value="PTH"/>
    <property type="match status" value="1"/>
</dbReference>
<dbReference type="FunFam" id="3.40.50.1470:FF:000001">
    <property type="entry name" value="Peptidyl-tRNA hydrolase"/>
    <property type="match status" value="1"/>
</dbReference>
<dbReference type="Gene3D" id="3.40.50.1470">
    <property type="entry name" value="Peptidyl-tRNA hydrolase"/>
    <property type="match status" value="1"/>
</dbReference>
<dbReference type="HAMAP" id="MF_00083">
    <property type="entry name" value="Pept_tRNA_hydro_bact"/>
    <property type="match status" value="1"/>
</dbReference>
<dbReference type="InterPro" id="IPR001328">
    <property type="entry name" value="Pept_tRNA_hydro"/>
</dbReference>
<dbReference type="InterPro" id="IPR018171">
    <property type="entry name" value="Pept_tRNA_hydro_CS"/>
</dbReference>
<dbReference type="InterPro" id="IPR036416">
    <property type="entry name" value="Pept_tRNA_hydro_sf"/>
</dbReference>
<dbReference type="NCBIfam" id="TIGR00447">
    <property type="entry name" value="pth"/>
    <property type="match status" value="1"/>
</dbReference>
<dbReference type="PANTHER" id="PTHR17224">
    <property type="entry name" value="PEPTIDYL-TRNA HYDROLASE"/>
    <property type="match status" value="1"/>
</dbReference>
<dbReference type="PANTHER" id="PTHR17224:SF1">
    <property type="entry name" value="PEPTIDYL-TRNA HYDROLASE"/>
    <property type="match status" value="1"/>
</dbReference>
<dbReference type="Pfam" id="PF01195">
    <property type="entry name" value="Pept_tRNA_hydro"/>
    <property type="match status" value="1"/>
</dbReference>
<dbReference type="SUPFAM" id="SSF53178">
    <property type="entry name" value="Peptidyl-tRNA hydrolase-like"/>
    <property type="match status" value="1"/>
</dbReference>
<dbReference type="PROSITE" id="PS01195">
    <property type="entry name" value="PEPT_TRNA_HYDROL_1"/>
    <property type="match status" value="1"/>
</dbReference>
<dbReference type="PROSITE" id="PS01196">
    <property type="entry name" value="PEPT_TRNA_HYDROL_2"/>
    <property type="match status" value="1"/>
</dbReference>
<keyword id="KW-0963">Cytoplasm</keyword>
<keyword id="KW-0378">Hydrolase</keyword>
<keyword id="KW-1185">Reference proteome</keyword>
<keyword id="KW-0694">RNA-binding</keyword>
<keyword id="KW-0820">tRNA-binding</keyword>